<name>YOPA_BACSU</name>
<dbReference type="EMBL" id="AL009126">
    <property type="protein sequence ID" value="CAB14014.1"/>
    <property type="molecule type" value="Genomic_DNA"/>
</dbReference>
<dbReference type="RefSeq" id="NP_389979.1">
    <property type="nucleotide sequence ID" value="NC_000964.3"/>
</dbReference>
<dbReference type="RefSeq" id="WP_004399369.1">
    <property type="nucleotide sequence ID" value="NZ_OZ025638.1"/>
</dbReference>
<dbReference type="FunCoup" id="O31937">
    <property type="interactions" value="1"/>
</dbReference>
<dbReference type="STRING" id="224308.BSU20960"/>
<dbReference type="PaxDb" id="224308-BSU20960"/>
<dbReference type="EnsemblBacteria" id="CAB14014">
    <property type="protein sequence ID" value="CAB14014"/>
    <property type="gene ID" value="BSU_20960"/>
</dbReference>
<dbReference type="GeneID" id="939175"/>
<dbReference type="KEGG" id="bsu:BSU20960"/>
<dbReference type="PATRIC" id="fig|224308.179.peg.2288"/>
<dbReference type="eggNOG" id="ENOG5031SN4">
    <property type="taxonomic scope" value="Bacteria"/>
</dbReference>
<dbReference type="InParanoid" id="O31937"/>
<dbReference type="OrthoDB" id="2443673at2"/>
<dbReference type="BioCyc" id="BSUB:BSU20960-MONOMER"/>
<dbReference type="Proteomes" id="UP000001570">
    <property type="component" value="Chromosome"/>
</dbReference>
<dbReference type="GO" id="GO:0005886">
    <property type="term" value="C:plasma membrane"/>
    <property type="evidence" value="ECO:0007669"/>
    <property type="project" value="UniProtKB-SubCell"/>
</dbReference>
<organism>
    <name type="scientific">Bacillus subtilis (strain 168)</name>
    <dbReference type="NCBI Taxonomy" id="224308"/>
    <lineage>
        <taxon>Bacteria</taxon>
        <taxon>Bacillati</taxon>
        <taxon>Bacillota</taxon>
        <taxon>Bacilli</taxon>
        <taxon>Bacillales</taxon>
        <taxon>Bacillaceae</taxon>
        <taxon>Bacillus</taxon>
    </lineage>
</organism>
<comment type="subcellular location">
    <subcellularLocation>
        <location evidence="2">Cell membrane</location>
        <topology evidence="2">Single-pass membrane protein</topology>
    </subcellularLocation>
</comment>
<reference key="1">
    <citation type="journal article" date="1997" name="Nature">
        <title>The complete genome sequence of the Gram-positive bacterium Bacillus subtilis.</title>
        <authorList>
            <person name="Kunst F."/>
            <person name="Ogasawara N."/>
            <person name="Moszer I."/>
            <person name="Albertini A.M."/>
            <person name="Alloni G."/>
            <person name="Azevedo V."/>
            <person name="Bertero M.G."/>
            <person name="Bessieres P."/>
            <person name="Bolotin A."/>
            <person name="Borchert S."/>
            <person name="Borriss R."/>
            <person name="Boursier L."/>
            <person name="Brans A."/>
            <person name="Braun M."/>
            <person name="Brignell S.C."/>
            <person name="Bron S."/>
            <person name="Brouillet S."/>
            <person name="Bruschi C.V."/>
            <person name="Caldwell B."/>
            <person name="Capuano V."/>
            <person name="Carter N.M."/>
            <person name="Choi S.-K."/>
            <person name="Codani J.-J."/>
            <person name="Connerton I.F."/>
            <person name="Cummings N.J."/>
            <person name="Daniel R.A."/>
            <person name="Denizot F."/>
            <person name="Devine K.M."/>
            <person name="Duesterhoeft A."/>
            <person name="Ehrlich S.D."/>
            <person name="Emmerson P.T."/>
            <person name="Entian K.-D."/>
            <person name="Errington J."/>
            <person name="Fabret C."/>
            <person name="Ferrari E."/>
            <person name="Foulger D."/>
            <person name="Fritz C."/>
            <person name="Fujita M."/>
            <person name="Fujita Y."/>
            <person name="Fuma S."/>
            <person name="Galizzi A."/>
            <person name="Galleron N."/>
            <person name="Ghim S.-Y."/>
            <person name="Glaser P."/>
            <person name="Goffeau A."/>
            <person name="Golightly E.J."/>
            <person name="Grandi G."/>
            <person name="Guiseppi G."/>
            <person name="Guy B.J."/>
            <person name="Haga K."/>
            <person name="Haiech J."/>
            <person name="Harwood C.R."/>
            <person name="Henaut A."/>
            <person name="Hilbert H."/>
            <person name="Holsappel S."/>
            <person name="Hosono S."/>
            <person name="Hullo M.-F."/>
            <person name="Itaya M."/>
            <person name="Jones L.-M."/>
            <person name="Joris B."/>
            <person name="Karamata D."/>
            <person name="Kasahara Y."/>
            <person name="Klaerr-Blanchard M."/>
            <person name="Klein C."/>
            <person name="Kobayashi Y."/>
            <person name="Koetter P."/>
            <person name="Koningstein G."/>
            <person name="Krogh S."/>
            <person name="Kumano M."/>
            <person name="Kurita K."/>
            <person name="Lapidus A."/>
            <person name="Lardinois S."/>
            <person name="Lauber J."/>
            <person name="Lazarevic V."/>
            <person name="Lee S.-M."/>
            <person name="Levine A."/>
            <person name="Liu H."/>
            <person name="Masuda S."/>
            <person name="Mauel C."/>
            <person name="Medigue C."/>
            <person name="Medina N."/>
            <person name="Mellado R.P."/>
            <person name="Mizuno M."/>
            <person name="Moestl D."/>
            <person name="Nakai S."/>
            <person name="Noback M."/>
            <person name="Noone D."/>
            <person name="O'Reilly M."/>
            <person name="Ogawa K."/>
            <person name="Ogiwara A."/>
            <person name="Oudega B."/>
            <person name="Park S.-H."/>
            <person name="Parro V."/>
            <person name="Pohl T.M."/>
            <person name="Portetelle D."/>
            <person name="Porwollik S."/>
            <person name="Prescott A.M."/>
            <person name="Presecan E."/>
            <person name="Pujic P."/>
            <person name="Purnelle B."/>
            <person name="Rapoport G."/>
            <person name="Rey M."/>
            <person name="Reynolds S."/>
            <person name="Rieger M."/>
            <person name="Rivolta C."/>
            <person name="Rocha E."/>
            <person name="Roche B."/>
            <person name="Rose M."/>
            <person name="Sadaie Y."/>
            <person name="Sato T."/>
            <person name="Scanlan E."/>
            <person name="Schleich S."/>
            <person name="Schroeter R."/>
            <person name="Scoffone F."/>
            <person name="Sekiguchi J."/>
            <person name="Sekowska A."/>
            <person name="Seror S.J."/>
            <person name="Serror P."/>
            <person name="Shin B.-S."/>
            <person name="Soldo B."/>
            <person name="Sorokin A."/>
            <person name="Tacconi E."/>
            <person name="Takagi T."/>
            <person name="Takahashi H."/>
            <person name="Takemaru K."/>
            <person name="Takeuchi M."/>
            <person name="Tamakoshi A."/>
            <person name="Tanaka T."/>
            <person name="Terpstra P."/>
            <person name="Tognoni A."/>
            <person name="Tosato V."/>
            <person name="Uchiyama S."/>
            <person name="Vandenbol M."/>
            <person name="Vannier F."/>
            <person name="Vassarotti A."/>
            <person name="Viari A."/>
            <person name="Wambutt R."/>
            <person name="Wedler E."/>
            <person name="Wedler H."/>
            <person name="Weitzenegger T."/>
            <person name="Winters P."/>
            <person name="Wipat A."/>
            <person name="Yamamoto H."/>
            <person name="Yamane K."/>
            <person name="Yasumoto K."/>
            <person name="Yata K."/>
            <person name="Yoshida K."/>
            <person name="Yoshikawa H.-F."/>
            <person name="Zumstein E."/>
            <person name="Yoshikawa H."/>
            <person name="Danchin A."/>
        </authorList>
    </citation>
    <scope>NUCLEOTIDE SEQUENCE [LARGE SCALE GENOMIC DNA]</scope>
    <source>
        <strain>168</strain>
    </source>
</reference>
<proteinExistence type="predicted"/>
<gene>
    <name type="primary">yopA</name>
    <name type="ordered locus">BSU20960</name>
</gene>
<feature type="chain" id="PRO_0000360459" description="SPbeta prophage-derived uncharacterized protein YopA">
    <location>
        <begin position="1"/>
        <end position="438"/>
    </location>
</feature>
<feature type="transmembrane region" description="Helical" evidence="1">
    <location>
        <begin position="391"/>
        <end position="411"/>
    </location>
</feature>
<sequence>MENIALESSFLEYDINEPIKIYTGHFTIEVADDFFEILGEVKIAFLPKARLIFEGAISGNLSKLFEFEKAMKSNNMMINVPGFMKSEVLISGITDGSKGNKVSGILKRSILTSAETKVNRMEFTVVNFVNDLGRRIVHGRFKFSGRTKLKYKDWEIILDKRYDYSNKKIFDRLKNSGGYLITHVGYLKRVDDKLFDTKEVEPLISGLYWLLSFSAGRHVAIPTLEGYHNEEVIWSKYQVPLIDGWTNNITWFPKQKSPSLEHLFPKVIEKQEDPFWNKVLWEVLSWYSQAHSSSIVENKVVSVQVALETLAWVYLIVDRKSNISKSKYKYMNAAEKFREILSRFSIDLSIPKLFIDIKDNYDDGPHLFTVFRNKIVHPTRELDFDNPIDKLHVLYLGVWYLELLTLGILGYEGSYVNRLKVPIIEGVYEFVPWKTRDN</sequence>
<keyword id="KW-1003">Cell membrane</keyword>
<keyword id="KW-0472">Membrane</keyword>
<keyword id="KW-1185">Reference proteome</keyword>
<keyword id="KW-0812">Transmembrane</keyword>
<keyword id="KW-1133">Transmembrane helix</keyword>
<accession>O31937</accession>
<evidence type="ECO:0000255" key="1"/>
<evidence type="ECO:0000305" key="2"/>
<protein>
    <recommendedName>
        <fullName>SPbeta prophage-derived uncharacterized protein YopA</fullName>
    </recommendedName>
</protein>